<protein>
    <recommendedName>
        <fullName evidence="1">NADH-quinone oxidoreductase subunit H</fullName>
        <ecNumber evidence="1">7.1.1.-</ecNumber>
    </recommendedName>
    <alternativeName>
        <fullName evidence="1">NADH dehydrogenase I subunit H</fullName>
    </alternativeName>
    <alternativeName>
        <fullName evidence="1">NDH-1 subunit H</fullName>
    </alternativeName>
</protein>
<keyword id="KW-0997">Cell inner membrane</keyword>
<keyword id="KW-1003">Cell membrane</keyword>
<keyword id="KW-0472">Membrane</keyword>
<keyword id="KW-0520">NAD</keyword>
<keyword id="KW-0874">Quinone</keyword>
<keyword id="KW-1185">Reference proteome</keyword>
<keyword id="KW-1278">Translocase</keyword>
<keyword id="KW-0812">Transmembrane</keyword>
<keyword id="KW-1133">Transmembrane helix</keyword>
<keyword id="KW-0830">Ubiquinone</keyword>
<sequence length="354" mass="39582">MIESFNQFGSSLLGGFWPVVWNLIKIVALIAPLMGCVAYLTLWERKAIGWTQIRPGPNRVGPWGLLTPIADAVKLIFKEIILPTAANKGLFLLGPVMTIMPALAAWVVVPFGPEVALANINAGLLFLMAITSMEVYGVIIAGWASNSKYAFLGALRASAQMVSYEIAMGFALVVVLMVSGTLNMTEIVLGQDRGRFADMGLNFLSWNWLPLFPIFIVYFISGLAETNRHPFDVVEGESEIVAGHMIEYSGMAFAMFFLAEYANMILISALAVTMFLGGWLPPIDSVVFNWIPGWIWLGLKTFVVVTMFLWVRSTFPRFRYDQIMRLGWKIFIPITLIWLVVVGLWIQSPWNIWK</sequence>
<organism>
    <name type="scientific">Methylibium petroleiphilum (strain ATCC BAA-1232 / LMG 22953 / PM1)</name>
    <dbReference type="NCBI Taxonomy" id="420662"/>
    <lineage>
        <taxon>Bacteria</taxon>
        <taxon>Pseudomonadati</taxon>
        <taxon>Pseudomonadota</taxon>
        <taxon>Betaproteobacteria</taxon>
        <taxon>Burkholderiales</taxon>
        <taxon>Sphaerotilaceae</taxon>
        <taxon>Methylibium</taxon>
    </lineage>
</organism>
<dbReference type="EC" id="7.1.1.-" evidence="1"/>
<dbReference type="EMBL" id="CP000555">
    <property type="protein sequence ID" value="ABM94372.1"/>
    <property type="molecule type" value="Genomic_DNA"/>
</dbReference>
<dbReference type="RefSeq" id="WP_011829009.1">
    <property type="nucleotide sequence ID" value="NC_008825.1"/>
</dbReference>
<dbReference type="SMR" id="A2SFN3"/>
<dbReference type="STRING" id="420662.Mpe_A1410"/>
<dbReference type="KEGG" id="mpt:Mpe_A1410"/>
<dbReference type="eggNOG" id="COG1005">
    <property type="taxonomic scope" value="Bacteria"/>
</dbReference>
<dbReference type="HOGENOM" id="CLU_015134_0_1_4"/>
<dbReference type="Proteomes" id="UP000000366">
    <property type="component" value="Chromosome"/>
</dbReference>
<dbReference type="GO" id="GO:0005886">
    <property type="term" value="C:plasma membrane"/>
    <property type="evidence" value="ECO:0007669"/>
    <property type="project" value="UniProtKB-SubCell"/>
</dbReference>
<dbReference type="GO" id="GO:0003954">
    <property type="term" value="F:NADH dehydrogenase activity"/>
    <property type="evidence" value="ECO:0007669"/>
    <property type="project" value="TreeGrafter"/>
</dbReference>
<dbReference type="GO" id="GO:0016655">
    <property type="term" value="F:oxidoreductase activity, acting on NAD(P)H, quinone or similar compound as acceptor"/>
    <property type="evidence" value="ECO:0007669"/>
    <property type="project" value="UniProtKB-UniRule"/>
</dbReference>
<dbReference type="GO" id="GO:0048038">
    <property type="term" value="F:quinone binding"/>
    <property type="evidence" value="ECO:0007669"/>
    <property type="project" value="UniProtKB-KW"/>
</dbReference>
<dbReference type="GO" id="GO:0009060">
    <property type="term" value="P:aerobic respiration"/>
    <property type="evidence" value="ECO:0007669"/>
    <property type="project" value="TreeGrafter"/>
</dbReference>
<dbReference type="HAMAP" id="MF_01350">
    <property type="entry name" value="NDH1_NuoH"/>
    <property type="match status" value="1"/>
</dbReference>
<dbReference type="InterPro" id="IPR001694">
    <property type="entry name" value="NADH_UbQ_OxRdtase_su1/FPO"/>
</dbReference>
<dbReference type="InterPro" id="IPR018086">
    <property type="entry name" value="NADH_UbQ_OxRdtase_su1_CS"/>
</dbReference>
<dbReference type="NCBIfam" id="NF004741">
    <property type="entry name" value="PRK06076.1-2"/>
    <property type="match status" value="1"/>
</dbReference>
<dbReference type="NCBIfam" id="NF004742">
    <property type="entry name" value="PRK06076.1-3"/>
    <property type="match status" value="1"/>
</dbReference>
<dbReference type="PANTHER" id="PTHR11432">
    <property type="entry name" value="NADH DEHYDROGENASE SUBUNIT 1"/>
    <property type="match status" value="1"/>
</dbReference>
<dbReference type="PANTHER" id="PTHR11432:SF3">
    <property type="entry name" value="NADH-UBIQUINONE OXIDOREDUCTASE CHAIN 1"/>
    <property type="match status" value="1"/>
</dbReference>
<dbReference type="Pfam" id="PF00146">
    <property type="entry name" value="NADHdh"/>
    <property type="match status" value="1"/>
</dbReference>
<dbReference type="PROSITE" id="PS00668">
    <property type="entry name" value="COMPLEX1_ND1_2"/>
    <property type="match status" value="1"/>
</dbReference>
<evidence type="ECO:0000255" key="1">
    <source>
        <dbReference type="HAMAP-Rule" id="MF_01350"/>
    </source>
</evidence>
<feature type="chain" id="PRO_0000299940" description="NADH-quinone oxidoreductase subunit H">
    <location>
        <begin position="1"/>
        <end position="354"/>
    </location>
</feature>
<feature type="transmembrane region" description="Helical" evidence="1">
    <location>
        <begin position="12"/>
        <end position="32"/>
    </location>
</feature>
<feature type="transmembrane region" description="Helical" evidence="1">
    <location>
        <begin position="62"/>
        <end position="82"/>
    </location>
</feature>
<feature type="transmembrane region" description="Helical" evidence="1">
    <location>
        <begin position="89"/>
        <end position="109"/>
    </location>
</feature>
<feature type="transmembrane region" description="Helical" evidence="1">
    <location>
        <begin position="124"/>
        <end position="144"/>
    </location>
</feature>
<feature type="transmembrane region" description="Helical" evidence="1">
    <location>
        <begin position="162"/>
        <end position="182"/>
    </location>
</feature>
<feature type="transmembrane region" description="Helical" evidence="1">
    <location>
        <begin position="203"/>
        <end position="223"/>
    </location>
</feature>
<feature type="transmembrane region" description="Helical" evidence="1">
    <location>
        <begin position="239"/>
        <end position="259"/>
    </location>
</feature>
<feature type="transmembrane region" description="Helical" evidence="1">
    <location>
        <begin position="263"/>
        <end position="283"/>
    </location>
</feature>
<feature type="transmembrane region" description="Helical" evidence="1">
    <location>
        <begin position="291"/>
        <end position="311"/>
    </location>
</feature>
<feature type="transmembrane region" description="Helical" evidence="1">
    <location>
        <begin position="326"/>
        <end position="346"/>
    </location>
</feature>
<proteinExistence type="inferred from homology"/>
<comment type="function">
    <text evidence="1">NDH-1 shuttles electrons from NADH, via FMN and iron-sulfur (Fe-S) centers, to quinones in the respiratory chain. The immediate electron acceptor for the enzyme in this species is believed to be ubiquinone. Couples the redox reaction to proton translocation (for every two electrons transferred, four hydrogen ions are translocated across the cytoplasmic membrane), and thus conserves the redox energy in a proton gradient. This subunit may bind ubiquinone.</text>
</comment>
<comment type="catalytic activity">
    <reaction evidence="1">
        <text>a quinone + NADH + 5 H(+)(in) = a quinol + NAD(+) + 4 H(+)(out)</text>
        <dbReference type="Rhea" id="RHEA:57888"/>
        <dbReference type="ChEBI" id="CHEBI:15378"/>
        <dbReference type="ChEBI" id="CHEBI:24646"/>
        <dbReference type="ChEBI" id="CHEBI:57540"/>
        <dbReference type="ChEBI" id="CHEBI:57945"/>
        <dbReference type="ChEBI" id="CHEBI:132124"/>
    </reaction>
</comment>
<comment type="subunit">
    <text evidence="1">NDH-1 is composed of 14 different subunits. Subunits NuoA, H, J, K, L, M, N constitute the membrane sector of the complex.</text>
</comment>
<comment type="subcellular location">
    <subcellularLocation>
        <location evidence="1">Cell inner membrane</location>
        <topology evidence="1">Multi-pass membrane protein</topology>
    </subcellularLocation>
</comment>
<comment type="similarity">
    <text evidence="1">Belongs to the complex I subunit 1 family.</text>
</comment>
<name>NUOH_METPP</name>
<accession>A2SFN3</accession>
<gene>
    <name evidence="1" type="primary">nuoH</name>
    <name type="ordered locus">Mpe_A1410</name>
</gene>
<reference key="1">
    <citation type="journal article" date="2007" name="J. Bacteriol.">
        <title>Whole-genome analysis of the methyl tert-butyl ether-degrading beta-proteobacterium Methylibium petroleiphilum PM1.</title>
        <authorList>
            <person name="Kane S.R."/>
            <person name="Chakicherla A.Y."/>
            <person name="Chain P.S.G."/>
            <person name="Schmidt R."/>
            <person name="Shin M.W."/>
            <person name="Legler T.C."/>
            <person name="Scow K.M."/>
            <person name="Larimer F.W."/>
            <person name="Lucas S.M."/>
            <person name="Richardson P.M."/>
            <person name="Hristova K.R."/>
        </authorList>
    </citation>
    <scope>NUCLEOTIDE SEQUENCE [LARGE SCALE GENOMIC DNA]</scope>
    <source>
        <strain>ATCC BAA-1232 / LMG 22953 / PM1</strain>
    </source>
</reference>